<feature type="chain" id="PRO_0000056089" description="Probable E3 ubiquitin-protein ligase rnf113">
    <location>
        <begin position="1"/>
        <end position="384"/>
    </location>
</feature>
<feature type="zinc finger region" description="C3H1-type" evidence="3">
    <location>
        <begin position="175"/>
        <end position="203"/>
    </location>
</feature>
<feature type="zinc finger region" description="RING-type" evidence="2">
    <location>
        <begin position="241"/>
        <end position="279"/>
    </location>
</feature>
<feature type="region of interest" description="Disordered" evidence="4">
    <location>
        <begin position="1"/>
        <end position="96"/>
    </location>
</feature>
<feature type="region of interest" description="Disordered" evidence="4">
    <location>
        <begin position="299"/>
        <end position="384"/>
    </location>
</feature>
<feature type="compositionally biased region" description="Basic residues" evidence="4">
    <location>
        <begin position="1"/>
        <end position="11"/>
    </location>
</feature>
<feature type="compositionally biased region" description="Polar residues" evidence="4">
    <location>
        <begin position="42"/>
        <end position="52"/>
    </location>
</feature>
<feature type="compositionally biased region" description="Acidic residues" evidence="4">
    <location>
        <begin position="60"/>
        <end position="71"/>
    </location>
</feature>
<feature type="compositionally biased region" description="Basic and acidic residues" evidence="4">
    <location>
        <begin position="303"/>
        <end position="312"/>
    </location>
</feature>
<feature type="compositionally biased region" description="Basic and acidic residues" evidence="4">
    <location>
        <begin position="320"/>
        <end position="334"/>
    </location>
</feature>
<feature type="compositionally biased region" description="Acidic residues" evidence="4">
    <location>
        <begin position="351"/>
        <end position="384"/>
    </location>
</feature>
<reference key="1">
    <citation type="journal article" date="1998" name="Science">
        <title>Genome sequence of the nematode C. elegans: a platform for investigating biology.</title>
        <authorList>
            <consortium name="The C. elegans sequencing consortium"/>
        </authorList>
    </citation>
    <scope>NUCLEOTIDE SEQUENCE [LARGE SCALE GENOMIC DNA]</scope>
    <source>
        <strain>Bristol N2</strain>
    </source>
</reference>
<reference key="2">
    <citation type="submission" date="2000-09" db="EMBL/GenBank/DDBJ databases">
        <title>The Caenorhabditis elegans transcriptome project, a complementary view of the genome.</title>
        <authorList>
            <person name="Kohara Y."/>
            <person name="Shin-i T."/>
            <person name="Suzuki Y."/>
            <person name="Sugano S."/>
            <person name="Potdevin M."/>
            <person name="Thierry-Mieg Y."/>
            <person name="Thierry-Mieg D."/>
            <person name="Thierry-Mieg J."/>
        </authorList>
    </citation>
    <scope>NUCLEOTIDE SEQUENCE [LARGE SCALE MRNA]</scope>
    <source>
        <strain>Bristol N2</strain>
    </source>
</reference>
<accession>O17917</accession>
<comment type="function">
    <text evidence="1">May function as E3 ubiquitin-protein ligase that catalyzes the transfer of ubiquitin onto target proteins. May play a role in DNA repair via its role in the synthesis of 'Lys-63'-linked polyubiquitin chains that recruit proteins involved in repair to sites of DNA damage by alkylating agents.</text>
</comment>
<comment type="catalytic activity">
    <reaction evidence="1">
        <text>S-ubiquitinyl-[E2 ubiquitin-conjugating enzyme]-L-cysteine + [acceptor protein]-L-lysine = [E2 ubiquitin-conjugating enzyme]-L-cysteine + N(6)-ubiquitinyl-[acceptor protein]-L-lysine.</text>
        <dbReference type="EC" id="2.3.2.27"/>
    </reaction>
</comment>
<comment type="pathway">
    <text evidence="1">Protein modification; protein ubiquitination.</text>
</comment>
<proteinExistence type="evidence at transcript level"/>
<organism>
    <name type="scientific">Caenorhabditis elegans</name>
    <dbReference type="NCBI Taxonomy" id="6239"/>
    <lineage>
        <taxon>Eukaryota</taxon>
        <taxon>Metazoa</taxon>
        <taxon>Ecdysozoa</taxon>
        <taxon>Nematoda</taxon>
        <taxon>Chromadorea</taxon>
        <taxon>Rhabditida</taxon>
        <taxon>Rhabditina</taxon>
        <taxon>Rhabditomorpha</taxon>
        <taxon>Rhabditoidea</taxon>
        <taxon>Rhabditidae</taxon>
        <taxon>Peloderinae</taxon>
        <taxon>Caenorhabditis</taxon>
    </lineage>
</organism>
<sequence length="384" mass="43428">MDLFRKPKKRNAPVVRKKESSSDEDQDSEVKDVIQKRRRTNPMVQSTKQLDASTRRADNSSDDSDDSDDNQDIAVATHSFAASGDAGPSGPRDQGATATLEVDTDYSHDAQAQFERVQQQLKEGVEKDGKILYKGSALYGAKEAKDTAKGNAASGYNRVGPVRAPQFLRQTVRWDFAPDICKDYKETGFCTFGDSCKFVHDRSDYKHGWEIDEEYEAGKYGAEDDANYEIHEGDDTFPEDCFICGNPFVDPIVTKCKHYFCTGCALKSFQKSSKCPICQQNTENIMNTAKELLTYLKRKKQQQKQEAEKQEEEKDSDDDEKPHECDDHHHHDHEDEPEEPENDSNVPEAEEKSDEEQEIMMEDVEGLEGGENDSESDDDDAEKD</sequence>
<protein>
    <recommendedName>
        <fullName>Probable E3 ubiquitin-protein ligase rnf113</fullName>
        <ecNumber evidence="1">2.3.2.27</ecNumber>
    </recommendedName>
    <alternativeName>
        <fullName>RING finger protein 113 homolog</fullName>
    </alternativeName>
</protein>
<gene>
    <name type="primary">rnf-113</name>
    <name type="ORF">K01G5.1</name>
</gene>
<name>RN113_CAEEL</name>
<evidence type="ECO:0000250" key="1">
    <source>
        <dbReference type="UniProtKB" id="O15541"/>
    </source>
</evidence>
<evidence type="ECO:0000255" key="2">
    <source>
        <dbReference type="PROSITE-ProRule" id="PRU00175"/>
    </source>
</evidence>
<evidence type="ECO:0000255" key="3">
    <source>
        <dbReference type="PROSITE-ProRule" id="PRU00723"/>
    </source>
</evidence>
<evidence type="ECO:0000256" key="4">
    <source>
        <dbReference type="SAM" id="MobiDB-lite"/>
    </source>
</evidence>
<keyword id="KW-0227">DNA damage</keyword>
<keyword id="KW-0234">DNA repair</keyword>
<keyword id="KW-0479">Metal-binding</keyword>
<keyword id="KW-1185">Reference proteome</keyword>
<keyword id="KW-0808">Transferase</keyword>
<keyword id="KW-0833">Ubl conjugation pathway</keyword>
<keyword id="KW-0862">Zinc</keyword>
<keyword id="KW-0863">Zinc-finger</keyword>
<dbReference type="EC" id="2.3.2.27" evidence="1"/>
<dbReference type="EMBL" id="Z92803">
    <property type="protein sequence ID" value="CAB07242.2"/>
    <property type="molecule type" value="Genomic_DNA"/>
</dbReference>
<dbReference type="EMBL" id="AF304126">
    <property type="protein sequence ID" value="AAG50239.1"/>
    <property type="molecule type" value="mRNA"/>
</dbReference>
<dbReference type="PIR" id="T23197">
    <property type="entry name" value="T23197"/>
</dbReference>
<dbReference type="RefSeq" id="NP_499375.1">
    <property type="nucleotide sequence ID" value="NM_066974.7"/>
</dbReference>
<dbReference type="SMR" id="O17917"/>
<dbReference type="BioGRID" id="41694">
    <property type="interactions" value="33"/>
</dbReference>
<dbReference type="FunCoup" id="O17917">
    <property type="interactions" value="1739"/>
</dbReference>
<dbReference type="IntAct" id="O17917">
    <property type="interactions" value="1"/>
</dbReference>
<dbReference type="STRING" id="6239.K01G5.1.1"/>
<dbReference type="PaxDb" id="6239-K01G5.1"/>
<dbReference type="PeptideAtlas" id="O17917"/>
<dbReference type="EnsemblMetazoa" id="K01G5.1.1">
    <property type="protein sequence ID" value="K01G5.1.1"/>
    <property type="gene ID" value="WBGene00010476"/>
</dbReference>
<dbReference type="GeneID" id="176507"/>
<dbReference type="KEGG" id="cel:CELE_K01G5.1"/>
<dbReference type="UCSC" id="K01G5.1.1">
    <property type="organism name" value="c. elegans"/>
</dbReference>
<dbReference type="AGR" id="WB:WBGene00010476"/>
<dbReference type="CTD" id="176507"/>
<dbReference type="WormBase" id="K01G5.1">
    <property type="protein sequence ID" value="CE26718"/>
    <property type="gene ID" value="WBGene00010476"/>
    <property type="gene designation" value="rnf-113"/>
</dbReference>
<dbReference type="eggNOG" id="KOG1813">
    <property type="taxonomic scope" value="Eukaryota"/>
</dbReference>
<dbReference type="GeneTree" id="ENSGT00390000016292"/>
<dbReference type="HOGENOM" id="CLU_050460_1_0_1"/>
<dbReference type="InParanoid" id="O17917"/>
<dbReference type="OMA" id="KKQATHN"/>
<dbReference type="OrthoDB" id="25761at2759"/>
<dbReference type="PhylomeDB" id="O17917"/>
<dbReference type="SignaLink" id="O17917"/>
<dbReference type="UniPathway" id="UPA00143"/>
<dbReference type="PRO" id="PR:O17917"/>
<dbReference type="Proteomes" id="UP000001940">
    <property type="component" value="Chromosome III"/>
</dbReference>
<dbReference type="Bgee" id="WBGene00010476">
    <property type="expression patterns" value="Expressed in germ line (C elegans) and 4 other cell types or tissues"/>
</dbReference>
<dbReference type="GO" id="GO:0005634">
    <property type="term" value="C:nucleus"/>
    <property type="evidence" value="ECO:0007005"/>
    <property type="project" value="WormBase"/>
</dbReference>
<dbReference type="GO" id="GO:0005684">
    <property type="term" value="C:U2-type spliceosomal complex"/>
    <property type="evidence" value="ECO:0000318"/>
    <property type="project" value="GO_Central"/>
</dbReference>
<dbReference type="GO" id="GO:0004842">
    <property type="term" value="F:ubiquitin-protein transferase activity"/>
    <property type="evidence" value="ECO:0000314"/>
    <property type="project" value="WormBase"/>
</dbReference>
<dbReference type="GO" id="GO:0008270">
    <property type="term" value="F:zinc ion binding"/>
    <property type="evidence" value="ECO:0007669"/>
    <property type="project" value="UniProtKB-KW"/>
</dbReference>
<dbReference type="GO" id="GO:0006281">
    <property type="term" value="P:DNA repair"/>
    <property type="evidence" value="ECO:0007669"/>
    <property type="project" value="UniProtKB-KW"/>
</dbReference>
<dbReference type="GO" id="GO:0016567">
    <property type="term" value="P:protein ubiquitination"/>
    <property type="evidence" value="ECO:0000314"/>
    <property type="project" value="WormBase"/>
</dbReference>
<dbReference type="GO" id="GO:0034247">
    <property type="term" value="P:snoRNA splicing"/>
    <property type="evidence" value="ECO:0000318"/>
    <property type="project" value="GO_Central"/>
</dbReference>
<dbReference type="CDD" id="cd16539">
    <property type="entry name" value="RING-HC_RNF113A_B"/>
    <property type="match status" value="1"/>
</dbReference>
<dbReference type="Gene3D" id="4.10.1000.10">
    <property type="entry name" value="Zinc finger, CCCH-type"/>
    <property type="match status" value="1"/>
</dbReference>
<dbReference type="Gene3D" id="3.30.40.10">
    <property type="entry name" value="Zinc/RING finger domain, C3HC4 (zinc finger)"/>
    <property type="match status" value="1"/>
</dbReference>
<dbReference type="InterPro" id="IPR039971">
    <property type="entry name" value="CWC24-like"/>
</dbReference>
<dbReference type="InterPro" id="IPR000571">
    <property type="entry name" value="Znf_CCCH"/>
</dbReference>
<dbReference type="InterPro" id="IPR036855">
    <property type="entry name" value="Znf_CCCH_sf"/>
</dbReference>
<dbReference type="InterPro" id="IPR001841">
    <property type="entry name" value="Znf_RING"/>
</dbReference>
<dbReference type="InterPro" id="IPR013083">
    <property type="entry name" value="Znf_RING/FYVE/PHD"/>
</dbReference>
<dbReference type="InterPro" id="IPR017907">
    <property type="entry name" value="Znf_RING_CS"/>
</dbReference>
<dbReference type="PANTHER" id="PTHR12930:SF0">
    <property type="entry name" value="RING FINGER PROTEIN 113B"/>
    <property type="match status" value="1"/>
</dbReference>
<dbReference type="PANTHER" id="PTHR12930">
    <property type="entry name" value="ZINC FINGER PROTEIN 183"/>
    <property type="match status" value="1"/>
</dbReference>
<dbReference type="Pfam" id="PF13920">
    <property type="entry name" value="zf-C3HC4_3"/>
    <property type="match status" value="1"/>
</dbReference>
<dbReference type="Pfam" id="PF00642">
    <property type="entry name" value="zf-CCCH"/>
    <property type="match status" value="1"/>
</dbReference>
<dbReference type="SMART" id="SM00184">
    <property type="entry name" value="RING"/>
    <property type="match status" value="1"/>
</dbReference>
<dbReference type="SMART" id="SM00356">
    <property type="entry name" value="ZnF_C3H1"/>
    <property type="match status" value="1"/>
</dbReference>
<dbReference type="SUPFAM" id="SSF90229">
    <property type="entry name" value="CCCH zinc finger"/>
    <property type="match status" value="1"/>
</dbReference>
<dbReference type="SUPFAM" id="SSF57850">
    <property type="entry name" value="RING/U-box"/>
    <property type="match status" value="1"/>
</dbReference>
<dbReference type="PROSITE" id="PS50103">
    <property type="entry name" value="ZF_C3H1"/>
    <property type="match status" value="1"/>
</dbReference>
<dbReference type="PROSITE" id="PS00518">
    <property type="entry name" value="ZF_RING_1"/>
    <property type="match status" value="1"/>
</dbReference>
<dbReference type="PROSITE" id="PS50089">
    <property type="entry name" value="ZF_RING_2"/>
    <property type="match status" value="1"/>
</dbReference>